<accession>Q9HFE8</accession>
<accession>A0AAN2H7Z9</accession>
<reference key="1">
    <citation type="journal article" date="2002" name="Nature">
        <title>The genome sequence of Schizosaccharomyces pombe.</title>
        <authorList>
            <person name="Wood V."/>
            <person name="Gwilliam R."/>
            <person name="Rajandream M.A."/>
            <person name="Lyne M.H."/>
            <person name="Lyne R."/>
            <person name="Stewart A."/>
            <person name="Sgouros J.G."/>
            <person name="Peat N."/>
            <person name="Hayles J."/>
            <person name="Baker S.G."/>
            <person name="Basham D."/>
            <person name="Bowman S."/>
            <person name="Brooks K."/>
            <person name="Brown D."/>
            <person name="Brown S."/>
            <person name="Chillingworth T."/>
            <person name="Churcher C.M."/>
            <person name="Collins M."/>
            <person name="Connor R."/>
            <person name="Cronin A."/>
            <person name="Davis P."/>
            <person name="Feltwell T."/>
            <person name="Fraser A."/>
            <person name="Gentles S."/>
            <person name="Goble A."/>
            <person name="Hamlin N."/>
            <person name="Harris D.E."/>
            <person name="Hidalgo J."/>
            <person name="Hodgson G."/>
            <person name="Holroyd S."/>
            <person name="Hornsby T."/>
            <person name="Howarth S."/>
            <person name="Huckle E.J."/>
            <person name="Hunt S."/>
            <person name="Jagels K."/>
            <person name="James K.D."/>
            <person name="Jones L."/>
            <person name="Jones M."/>
            <person name="Leather S."/>
            <person name="McDonald S."/>
            <person name="McLean J."/>
            <person name="Mooney P."/>
            <person name="Moule S."/>
            <person name="Mungall K.L."/>
            <person name="Murphy L.D."/>
            <person name="Niblett D."/>
            <person name="Odell C."/>
            <person name="Oliver K."/>
            <person name="O'Neil S."/>
            <person name="Pearson D."/>
            <person name="Quail M.A."/>
            <person name="Rabbinowitsch E."/>
            <person name="Rutherford K.M."/>
            <person name="Rutter S."/>
            <person name="Saunders D."/>
            <person name="Seeger K."/>
            <person name="Sharp S."/>
            <person name="Skelton J."/>
            <person name="Simmonds M.N."/>
            <person name="Squares R."/>
            <person name="Squares S."/>
            <person name="Stevens K."/>
            <person name="Taylor K."/>
            <person name="Taylor R.G."/>
            <person name="Tivey A."/>
            <person name="Walsh S.V."/>
            <person name="Warren T."/>
            <person name="Whitehead S."/>
            <person name="Woodward J.R."/>
            <person name="Volckaert G."/>
            <person name="Aert R."/>
            <person name="Robben J."/>
            <person name="Grymonprez B."/>
            <person name="Weltjens I."/>
            <person name="Vanstreels E."/>
            <person name="Rieger M."/>
            <person name="Schaefer M."/>
            <person name="Mueller-Auer S."/>
            <person name="Gabel C."/>
            <person name="Fuchs M."/>
            <person name="Duesterhoeft A."/>
            <person name="Fritzc C."/>
            <person name="Holzer E."/>
            <person name="Moestl D."/>
            <person name="Hilbert H."/>
            <person name="Borzym K."/>
            <person name="Langer I."/>
            <person name="Beck A."/>
            <person name="Lehrach H."/>
            <person name="Reinhardt R."/>
            <person name="Pohl T.M."/>
            <person name="Eger P."/>
            <person name="Zimmermann W."/>
            <person name="Wedler H."/>
            <person name="Wambutt R."/>
            <person name="Purnelle B."/>
            <person name="Goffeau A."/>
            <person name="Cadieu E."/>
            <person name="Dreano S."/>
            <person name="Gloux S."/>
            <person name="Lelaure V."/>
            <person name="Mottier S."/>
            <person name="Galibert F."/>
            <person name="Aves S.J."/>
            <person name="Xiang Z."/>
            <person name="Hunt C."/>
            <person name="Moore K."/>
            <person name="Hurst S.M."/>
            <person name="Lucas M."/>
            <person name="Rochet M."/>
            <person name="Gaillardin C."/>
            <person name="Tallada V.A."/>
            <person name="Garzon A."/>
            <person name="Thode G."/>
            <person name="Daga R.R."/>
            <person name="Cruzado L."/>
            <person name="Jimenez J."/>
            <person name="Sanchez M."/>
            <person name="del Rey F."/>
            <person name="Benito J."/>
            <person name="Dominguez A."/>
            <person name="Revuelta J.L."/>
            <person name="Moreno S."/>
            <person name="Armstrong J."/>
            <person name="Forsburg S.L."/>
            <person name="Cerutti L."/>
            <person name="Lowe T."/>
            <person name="McCombie W.R."/>
            <person name="Paulsen I."/>
            <person name="Potashkin J."/>
            <person name="Shpakovski G.V."/>
            <person name="Ussery D."/>
            <person name="Barrell B.G."/>
            <person name="Nurse P."/>
        </authorList>
    </citation>
    <scope>NUCLEOTIDE SEQUENCE [LARGE SCALE GENOMIC DNA]</scope>
    <source>
        <strain>972 / ATCC 24843</strain>
    </source>
</reference>
<reference key="2">
    <citation type="journal article" date="2007" name="Genes Cells">
        <title>Rapamycin sensitivity of the Schizosaccharomyces pombe tor2 mutant and organization of two highly phosphorylated TOR complexes by specific and common subunits.</title>
        <authorList>
            <person name="Hayashi T."/>
            <person name="Hatanaka M."/>
            <person name="Nagao K."/>
            <person name="Nakaseko Y."/>
            <person name="Kanoh J."/>
            <person name="Kokubu A."/>
            <person name="Ebe M."/>
            <person name="Yanagida M."/>
        </authorList>
    </citation>
    <scope>INTERACTION WITH TEL2</scope>
</reference>
<reference key="3">
    <citation type="journal article" date="2008" name="Genes Dev.">
        <title>The S. pombe SAGA complex controls the switch from proliferation to sexual differentiation through the opposing roles of its subunits Gcn5 and Spt8.</title>
        <authorList>
            <person name="Helmlinger D."/>
            <person name="Marguerat S."/>
            <person name="Villen J."/>
            <person name="Gygi S.P."/>
            <person name="Bahler J."/>
            <person name="Winston F."/>
        </authorList>
    </citation>
    <scope>IDENTIFICATION IN THE SAGA COMPLEX</scope>
    <scope>IDENTIFICATION BY MASS SPECTROMETRY</scope>
</reference>
<reference key="4">
    <citation type="journal article" date="2011" name="EMBO J.">
        <title>Tra1 has specific regulatory roles, rather than global functions, within the SAGA co-activator complex.</title>
        <authorList>
            <person name="Helmlinger D."/>
            <person name="Marguerat S."/>
            <person name="Villen J."/>
            <person name="Swaney D.L."/>
            <person name="Gygi S.P."/>
            <person name="Bahler J."/>
            <person name="Winston F."/>
        </authorList>
    </citation>
    <scope>FUNCTION</scope>
</reference>
<reference key="5">
    <citation type="journal article" date="2019" name="Nat. Commun.">
        <title>Chaperone-mediated ordered assembly of the SAGA and NuA4 transcription co-activator complexes in yeast.</title>
        <authorList>
            <person name="Elias-Villalobos A."/>
            <person name="Toullec D."/>
            <person name="Faux C."/>
            <person name="Seveno M."/>
            <person name="Helmlinger D."/>
        </authorList>
    </citation>
    <scope>SUBUNIT</scope>
</reference>
<proteinExistence type="evidence at protein level"/>
<organism>
    <name type="scientific">Schizosaccharomyces pombe (strain 972 / ATCC 24843)</name>
    <name type="common">Fission yeast</name>
    <dbReference type="NCBI Taxonomy" id="284812"/>
    <lineage>
        <taxon>Eukaryota</taxon>
        <taxon>Fungi</taxon>
        <taxon>Dikarya</taxon>
        <taxon>Ascomycota</taxon>
        <taxon>Taphrinomycotina</taxon>
        <taxon>Schizosaccharomycetes</taxon>
        <taxon>Schizosaccharomycetales</taxon>
        <taxon>Schizosaccharomycetaceae</taxon>
        <taxon>Schizosaccharomyces</taxon>
    </lineage>
</organism>
<dbReference type="EMBL" id="CU329671">
    <property type="protein sequence ID" value="CAK9840072.1"/>
    <property type="molecule type" value="Genomic_DNA"/>
</dbReference>
<dbReference type="RefSeq" id="NP_595777.1">
    <property type="nucleotide sequence ID" value="NM_001021677.2"/>
</dbReference>
<dbReference type="SMR" id="Q9HFE8"/>
<dbReference type="BioGRID" id="277779">
    <property type="interactions" value="38"/>
</dbReference>
<dbReference type="FunCoup" id="Q9HFE8">
    <property type="interactions" value="778"/>
</dbReference>
<dbReference type="IntAct" id="Q9HFE8">
    <property type="interactions" value="24"/>
</dbReference>
<dbReference type="MINT" id="Q9HFE8"/>
<dbReference type="STRING" id="284812.Q9HFE8"/>
<dbReference type="iPTMnet" id="Q9HFE8"/>
<dbReference type="PaxDb" id="4896-SPBP16F5.03c.1"/>
<dbReference type="EnsemblFungi" id="SPBP16F5.03c.1">
    <property type="protein sequence ID" value="SPBP16F5.03c.1:pep"/>
    <property type="gene ID" value="SPBP16F5.03c"/>
</dbReference>
<dbReference type="GeneID" id="2541265"/>
<dbReference type="KEGG" id="spo:2541265"/>
<dbReference type="PomBase" id="SPBP16F5.03c">
    <property type="gene designation" value="tra1"/>
</dbReference>
<dbReference type="VEuPathDB" id="FungiDB:SPBP16F5.03c"/>
<dbReference type="eggNOG" id="KOG0889">
    <property type="taxonomic scope" value="Eukaryota"/>
</dbReference>
<dbReference type="HOGENOM" id="CLU_000129_1_0_1"/>
<dbReference type="InParanoid" id="Q9HFE8"/>
<dbReference type="OMA" id="CLDLYGQ"/>
<dbReference type="PhylomeDB" id="Q9HFE8"/>
<dbReference type="Reactome" id="R-SPO-5689880">
    <property type="pathway name" value="Ub-specific processing proteases"/>
</dbReference>
<dbReference type="PRO" id="PR:Q9HFE8"/>
<dbReference type="Proteomes" id="UP000002485">
    <property type="component" value="Chromosome II"/>
</dbReference>
<dbReference type="GO" id="GO:0005634">
    <property type="term" value="C:nucleus"/>
    <property type="evidence" value="ECO:0000318"/>
    <property type="project" value="GO_Central"/>
</dbReference>
<dbReference type="GO" id="GO:0000124">
    <property type="term" value="C:SAGA complex"/>
    <property type="evidence" value="ECO:0000314"/>
    <property type="project" value="PomBase"/>
</dbReference>
<dbReference type="GO" id="GO:0140463">
    <property type="term" value="F:chromatin-protein adaptor activity"/>
    <property type="evidence" value="ECO:0000269"/>
    <property type="project" value="PomBase"/>
</dbReference>
<dbReference type="GO" id="GO:0140861">
    <property type="term" value="P:DNA repair-dependent chromatin remodeling"/>
    <property type="evidence" value="ECO:0000318"/>
    <property type="project" value="GO_Central"/>
</dbReference>
<dbReference type="GO" id="GO:0000122">
    <property type="term" value="P:negative regulation of transcription by RNA polymerase II"/>
    <property type="evidence" value="ECO:0000315"/>
    <property type="project" value="PomBase"/>
</dbReference>
<dbReference type="GO" id="GO:0045893">
    <property type="term" value="P:positive regulation of DNA-templated transcription"/>
    <property type="evidence" value="ECO:0007669"/>
    <property type="project" value="GOC"/>
</dbReference>
<dbReference type="GO" id="GO:0006355">
    <property type="term" value="P:regulation of DNA-templated transcription"/>
    <property type="evidence" value="ECO:0000318"/>
    <property type="project" value="GO_Central"/>
</dbReference>
<dbReference type="GO" id="GO:0006357">
    <property type="term" value="P:regulation of transcription by RNA polymerase II"/>
    <property type="evidence" value="ECO:0000269"/>
    <property type="project" value="PomBase"/>
</dbReference>
<dbReference type="GO" id="GO:0045815">
    <property type="term" value="P:transcription initiation-coupled chromatin remodeling"/>
    <property type="evidence" value="ECO:0000305"/>
    <property type="project" value="PomBase"/>
</dbReference>
<dbReference type="CDD" id="cd05163">
    <property type="entry name" value="PIKK_TRRAP"/>
    <property type="match status" value="1"/>
</dbReference>
<dbReference type="InterPro" id="IPR016024">
    <property type="entry name" value="ARM-type_fold"/>
</dbReference>
<dbReference type="InterPro" id="IPR050517">
    <property type="entry name" value="DDR_Repair_Kinase"/>
</dbReference>
<dbReference type="InterPro" id="IPR003152">
    <property type="entry name" value="FATC_dom"/>
</dbReference>
<dbReference type="InterPro" id="IPR011009">
    <property type="entry name" value="Kinase-like_dom_sf"/>
</dbReference>
<dbReference type="InterPro" id="IPR000403">
    <property type="entry name" value="PI3/4_kinase_cat_dom"/>
</dbReference>
<dbReference type="InterPro" id="IPR003151">
    <property type="entry name" value="PIK-rel_kinase_FAT"/>
</dbReference>
<dbReference type="InterPro" id="IPR014009">
    <property type="entry name" value="PIK_FAT"/>
</dbReference>
<dbReference type="InterPro" id="IPR046807">
    <property type="entry name" value="Tra1_central"/>
</dbReference>
<dbReference type="InterPro" id="IPR046805">
    <property type="entry name" value="Tra1_ring"/>
</dbReference>
<dbReference type="PANTHER" id="PTHR11139">
    <property type="entry name" value="ATAXIA TELANGIECTASIA MUTATED ATM -RELATED"/>
    <property type="match status" value="1"/>
</dbReference>
<dbReference type="PANTHER" id="PTHR11139:SF1">
    <property type="entry name" value="TRANSFORMATION_TRANSCRIPTION DOMAIN-ASSOCIATED PROTEIN"/>
    <property type="match status" value="1"/>
</dbReference>
<dbReference type="Pfam" id="PF02259">
    <property type="entry name" value="FAT"/>
    <property type="match status" value="1"/>
</dbReference>
<dbReference type="Pfam" id="PF02260">
    <property type="entry name" value="FATC"/>
    <property type="match status" value="1"/>
</dbReference>
<dbReference type="Pfam" id="PF00454">
    <property type="entry name" value="PI3_PI4_kinase"/>
    <property type="match status" value="1"/>
</dbReference>
<dbReference type="Pfam" id="PF20175">
    <property type="entry name" value="Tra1_central"/>
    <property type="match status" value="1"/>
</dbReference>
<dbReference type="Pfam" id="PF20206">
    <property type="entry name" value="Tra1_ring"/>
    <property type="match status" value="1"/>
</dbReference>
<dbReference type="SMART" id="SM01343">
    <property type="entry name" value="FATC"/>
    <property type="match status" value="1"/>
</dbReference>
<dbReference type="SMART" id="SM00146">
    <property type="entry name" value="PI3Kc"/>
    <property type="match status" value="1"/>
</dbReference>
<dbReference type="SUPFAM" id="SSF48371">
    <property type="entry name" value="ARM repeat"/>
    <property type="match status" value="3"/>
</dbReference>
<dbReference type="SUPFAM" id="SSF56112">
    <property type="entry name" value="Protein kinase-like (PK-like)"/>
    <property type="match status" value="1"/>
</dbReference>
<dbReference type="PROSITE" id="PS51189">
    <property type="entry name" value="FAT"/>
    <property type="match status" value="1"/>
</dbReference>
<dbReference type="PROSITE" id="PS51190">
    <property type="entry name" value="FATC"/>
    <property type="match status" value="2"/>
</dbReference>
<dbReference type="PROSITE" id="PS50290">
    <property type="entry name" value="PI3_4_KINASE_3"/>
    <property type="match status" value="1"/>
</dbReference>
<gene>
    <name type="primary">tra1</name>
    <name evidence="13" type="ORF">SPBP16F5.03c</name>
</gene>
<comment type="function">
    <text evidence="1 9">Essential scaffold subunit of the transcription coactivator SAGA complex. SAGA acts as a general cofactor required for essentially all RNA polymerase II transcription. At the promoters, SAGA is required for transcription pre-initiation complex (PIC) recruitment. It influences RNA polymerase II transcriptional activity through different activities such as TBP interaction (via core/TAF module) and promoter selectivity, interaction with transcription activators (via Tra1/SPT module), and chromatin modification through histone acetylation (via HAT module) and deubiquitination (via DUB module). SAGA preferentially acetylates histones H3 (to form H3K9ac, H3K14ac, H3K18ac and H3K23ac) and H2B and deubiquitinates histone H2B. SAGA interacts with DNA via upstream activating sequences (UASs) (By similarity). Required for SAGA recruitment in a gene-specific manner (PubMed:21642955).</text>
</comment>
<comment type="subunit">
    <text evidence="1 7 8 10">Component of the 1.8 MDa SAGA (Spt-Ada-Gcn5 acetyltransferase) complex, which is composed of 19 subunits tra1, spt7, taf5, ngg1/ada3, sgf73, spt20, spt8, taf12, taf6, hfi1/ada1, ubp8, gcn5, ada2, spt3, sgf29, taf10, taf9, sgf11 and sus1 (PubMed:19056896). The SAGA complex is composed of 4 modules, namely the HAT (histone acetyltransferase) module (gcn5, ada2, ngg1/ada3 and sgf29), the DUB (deubiquitinating) module (ubp8, sgf11, sgf73 and sus1), the core or TAF (TBP-associated factor) module (taf5, taf6, taf9, taf10 and taf12), and the Tra1 or SPT (Suppressor of Ty) module (tra1, hfi1/ada1, spt3, spt7, spt8 and spt20). The Tra1/SPT module binds activators, the core module recruits TBP (TATA-binding protein), the HAT module contains the histone H3 acetyltransferase gcn5, and the DUB module comprises the histone H2B deubiquitinase ubp8 (By similarity). Requires Hsp90 and its co-chaperone, the Triple-T complex (TTT), for its incorporation into SAGA (PubMed:31748520). Interacts with tel2 (PubMed:18076573).</text>
</comment>
<comment type="subcellular location">
    <subcellularLocation>
        <location evidence="1">Nucleus</location>
    </subcellularLocation>
</comment>
<comment type="domain">
    <text evidence="1">The C-terminal domain (2233-2836) is essential for its ability to interact with activators.</text>
</comment>
<comment type="domain">
    <text evidence="1">The FATC domain and precise positioning of the C-terminal carboxyl group are required for stability and function of the protein.</text>
</comment>
<comment type="miscellaneous">
    <text evidence="12">Although strongly related to the PI3/PI4-kinase family, it lacks the typical motifs that constitute the catalytic site of PI3/PI4-kinase proteins, suggesting that it may lack such activity.</text>
</comment>
<comment type="similarity">
    <text evidence="11">Belongs to the PI3/PI4-kinase family. TRA1 subfamily.</text>
</comment>
<sequence length="3661" mass="417858">MDVSQCEHWHNRLCDVGLDSKQKANTAIEIRDALDDVLVTEKTNFETFIPLLEDTLSLLEKERPVFSSLAATHRLRIALLELLKKSGSYKGFEAFVNRTFAVLLRIVVNDNEEMAVLALKLVVLLFKDHSSLAKGHVQEFLSIVVENYKSMTTVVSEAFPPRSAPNTPSSHPMSAASSASPAEIGMEHAGPKMIPKASSSFKVTAEFPIIVFLLFQTYKDLIPKMLPLLAPLVLQFISLRPPPQAEARRLAESQKEVFIGVVPSLRRNHLYNDLISAQIKSFSFLAYLLRSFGAALKQFESSIPICTLQLFMDCPSELYQTRRELLVATRHVLSTDYLRGFLPYVDQLLDTKILVGSGITSQHSLRPMAFSMLADMLHYVRMELSPQQIYKVILLYFSILMDDFYTSAIQAMATKLILNLVERIVALEDFSTSRSLLFAILLCLLRKLTSLNFEFMKLRDSLQENADLKQIKIEENKHDLPMFENPTGAAQPSGLDKLKDCIFLFKNTLLGIKPVLFGLKQRNIPLANGSIFTAQEWSEKLHLSSTNEVLLFRRLLVESLKGFSYYQTDEKTGVFKSSKNLAYSQLDSSLTTNPSKLLEEKELLEMLATLFLHLDPSVFVEILESEFPNIFECLVDNLALLHIFQFWMSNEVTSVNCTGIVLSFCCDNLAKIGSGQSTRVSVLLRLFKLAFMTVNVFPEKNAEVLRPHISYIISTSLELTTDAVEPLNYVYLMKALFRNISGGKFDSLYKEILPLLQVMLECFNRLIFTVTSTSQKELYAELCLTLPIRLSVLLPHMNFLMKPLIVALKGPPEIASQGLRIFELCLDNLTQEFLDPLLDSIMPDLLICLWNHSRLNQSNNQLHQSAVRILGKMGGRNRQIYLGTFGFDFLQDENIFPSIQFSFQGSSQNFSLEHSKFLMSSCAVLNNQNSDLEEKKQAFQMVKNSYLLLFASAKPDEDFWESIDTMCRAVVDRMDKNLQQVSNGRLCPDKDESYYLQRSIVSNIFKSLVGSMSCVEFVAEARETINRSLEWLIVLDLVNYADSLQIKDQNIFDNLQSIKMLDLTTCINGIFESLCSENENTRSNALSCIDHYLNAHKMLLNTTLDISKLPSFQNLVTVFCQSCHKELWYQKNAGFLGLKAILSYDSHHKLWIQDRLHDILKALFFILKDTPTDYGVLKLTEVRSFIVDITTQFCILQDVLAPKERANNIINAFSPFFLELLHPNDHVRNTVQQAIENISNNSKLSVVDLLLPIKDRLLSPIFGKPLRALPFTIQIGHIDAITYCLHRSPSFLDLTDELYRLFRETIALADAEDEALVTMLKTSQSKDSSSLRKLRATCLHLLFASLVAHKFDQPQHAQTRTKIIAIFFKDLYSPHKEIYSVAIDALRHVLSQNQKLPKELLQSGLRPILMNLSDHNKLSVNGLEGLSRLLRLLTNYFKVEIGRKLLQHLNVLSDSKVLETASLSLLKTNPRIEIIVSLVNVFRDLPPLSAQFLGDLLSSVVNIEAVLRKYSNSPLRKPLYSFMDLHANDTWMYILNNARNGDLITRFVGALNDPMSEKLRETAGNYWGKLLELISQPVSVENLAPMYAVDIIATVFPYISANVDAGVISAKFIVLSKSLYGMLSSYNEYLFLPIRRCISSITKMLLSSLKKIEKKLEFSLEVFRFKADDDNDFLPEYIDSLCGCLITSTSAAEKKSIFLVCCSIVGDKSVRPFFKAFLLDKVINPLVFKSCGENNFIDKDVVHSVYTHVWRVSIRDFAEVSGATDSFYMGIMCLTTALCKYHSALLNDYRKSVIMSAWNYIKLEDPMVKQAAYATIACFISAYDTPAKIVTPVYVSILKTYQPEVRAFIEFSLASLLSVLTARLSSPSDSTFPLWAKLPRLVISEDVQGISQPLTVYQFICKAPDLFFSCCSHFIVPMVNALPKLVSFSSASTEPRKLALDIVQTFINWQRKQNESENSETTLFSNSHIEAILTFLIKFLSLFPEPVEENPLSKKGLSLFNDLFSFPRWKDCQLNSNFFEKILVDMDFNDNNYRTVANTLFVFGVILKNRGMEYIQREYSHIIALIDKSLRCGKLPVTHSLEQIILLLLQSHPTQAEEEEDTNEADDFKQLLLSVIHDNLAAATNIESAICYLQIVKSSNPEALDGLLLPLNKCFQKVARDHIVACMQSAIQASGKVTLPSASDTVSKLLISFIEIIRVRMASLGDQRRWFLSVVVQLLEKSSSFELCEHILNVTKEWVIVKRDSFLTVKEKTALLLKMRTFEGRFDNKLYIEACDLLSTIYRDPIFAHTELTARLKQAFLLATASKDTKIRMDFMDIFDSSMSRNVYSRLTFILDATSWDTIPSIYWIKQANYILLGAINAKQPVRLTDNSLRFAPVPMTKPILSSLPEVFSKHNGSAIPLGRFTFFKQLDLFLKRNKELTVQKIIFPLAHIQMLSDADANKLWQYIFPLAWKILSSDNRSDLSKSLIYLLTRDYHIKQVNNRPNVISTLVSSFVKCAAKLELPPHLVKYLGKLYGVYHESVSLLEIQLSDKYDMYQNAKVQESRADAVAELYASLNEDDMFYGHWRRNCKYLQTQVALSYEQLGMWGRAQQLYEQAQTKARSEAIPFSESEYNLWEDQWVMCAQKLQQWDVLTELAKHEGSSELLLECAWRISDWSNNRESLEVAIKSLSDVPTPRKLTFQCFMTLQKSVSQPLAIKEFQQVLSEAIQLALIKWHQLPEKVNQSHYSLLHLFQQFVELQEAATIYSHLNAINFQNLPTNVQLIKSALQVWQERLPNVWDDINLWRDLISWRQIVFSMINRVYLPLVPTIQANSSADSSNPPNTSFLFRGYHETAWLINRFAHVARKHKLPSVCLNQLTKIYTLPNIEIQEAFYKLREQVLCYLQNPRDLKTGLEVVTNTNLMYFNSRQKSEFVTLKGKFLEKLNRGEEANQMYAAAVQIDLGLPKAWAEWGRYNDLLFNKSPDNLSAACNAISCYLQAAGTYQSSKARKMLARVLWLLSLNDSAGTIVKAFESYKGDIPVWHWLTFIPQLLNSLSKGDTKCAPVVLKKIAKSYPQALFFTLRTAREDIAQVKRTEMAAWKSNTTDENKRNEDILSIQSNFLSTNQSTNAPATNKEDGLSKKVWEYIDEIMSILKTAYPLLALTMETLVDQIQAKFKCKNDGDAFRLVVALLNDAVQHSIRLGIVTDEMKLPSSTESNLSLFADNILPDYCKQLFKEDFIVNSNGLKSYIFKLRKWRSYFERLLSKVPKKQYLEQYSSFLCEFHHQKFDEIEVPGQYLLHKDNNNSFSCIERFLPEVELIVGHGVCYRRLSIRSNGGTIHPFVIQYPSARNSRREERFMQLTRYLNDALALNCETRRRCLKFYIPAVIPLSSHIRLLEDQPSSITLQKIYEIYSERNNFSRDDPKELFTNELSKHMMELNSQISQESTDAEKLANRKQLFSRRIGMFENIQKLYSPSTILKDYFSSIFTNYSDLWLFRKNFSYQYACFSFITYILSINNRIPAKLVFSRDSGGVWTTEALPSMVSSTPVYHNGEIVPFRFTPNIKEFIGKTCTEGLLGPSIMAIARALSKPDFDLDMYLGIFIRDDLFWWLAQQTKGVPADFSMLNKVNSNTDLIMRRVASLSQVAYGNLPVNQTAIDYLAQASSSKVLAQMDVLWAPWL</sequence>
<evidence type="ECO:0000250" key="1">
    <source>
        <dbReference type="UniProtKB" id="P38811"/>
    </source>
</evidence>
<evidence type="ECO:0000255" key="2"/>
<evidence type="ECO:0000255" key="3">
    <source>
        <dbReference type="PROSITE-ProRule" id="PRU00269"/>
    </source>
</evidence>
<evidence type="ECO:0000255" key="4">
    <source>
        <dbReference type="PROSITE-ProRule" id="PRU00534"/>
    </source>
</evidence>
<evidence type="ECO:0000255" key="5">
    <source>
        <dbReference type="PROSITE-ProRule" id="PRU00535"/>
    </source>
</evidence>
<evidence type="ECO:0000256" key="6">
    <source>
        <dbReference type="SAM" id="MobiDB-lite"/>
    </source>
</evidence>
<evidence type="ECO:0000269" key="7">
    <source>
    </source>
</evidence>
<evidence type="ECO:0000269" key="8">
    <source>
    </source>
</evidence>
<evidence type="ECO:0000269" key="9">
    <source>
    </source>
</evidence>
<evidence type="ECO:0000269" key="10">
    <source>
    </source>
</evidence>
<evidence type="ECO:0000305" key="11"/>
<evidence type="ECO:0000305" key="12">
    <source>
    </source>
</evidence>
<evidence type="ECO:0000312" key="13">
    <source>
        <dbReference type="PomBase" id="SPBP16F5.03c"/>
    </source>
</evidence>
<protein>
    <recommendedName>
        <fullName>SAGA complex/NuA4 acetyltransferase complex subunit Tra1</fullName>
    </recommendedName>
    <alternativeName>
        <fullName>Transcription-associated protein 1</fullName>
    </alternativeName>
</protein>
<feature type="chain" id="PRO_0000314773" description="SAGA complex/NuA4 acetyltransferase complex subunit Tra1">
    <location>
        <begin position="1"/>
        <end position="3661"/>
    </location>
</feature>
<feature type="repeat" description="HEAT 1" evidence="2">
    <location>
        <begin position="46"/>
        <end position="88"/>
    </location>
</feature>
<feature type="repeat" description="HEAT 2" evidence="2">
    <location>
        <begin position="94"/>
        <end position="131"/>
    </location>
</feature>
<feature type="repeat" description="HEAT 3" evidence="2">
    <location>
        <begin position="216"/>
        <end position="256"/>
    </location>
</feature>
<feature type="repeat" description="HEAT 4" evidence="2">
    <location>
        <begin position="339"/>
        <end position="382"/>
    </location>
</feature>
<feature type="repeat" description="HEAT 5" evidence="2">
    <location>
        <begin position="431"/>
        <end position="468"/>
    </location>
</feature>
<feature type="repeat" description="HEAT 6" evidence="2">
    <location>
        <begin position="601"/>
        <end position="640"/>
    </location>
</feature>
<feature type="repeat" description="HEAT 7" evidence="2">
    <location>
        <begin position="750"/>
        <end position="788"/>
    </location>
</feature>
<feature type="repeat" description="HEAT 8" evidence="2">
    <location>
        <begin position="795"/>
        <end position="831"/>
    </location>
</feature>
<feature type="repeat" description="HEAT 9" evidence="2">
    <location>
        <begin position="836"/>
        <end position="879"/>
    </location>
</feature>
<feature type="repeat" description="HEAT 10" evidence="2">
    <location>
        <begin position="1061"/>
        <end position="1098"/>
    </location>
</feature>
<feature type="repeat" description="HEAT 11" evidence="2">
    <location>
        <begin position="1154"/>
        <end position="1191"/>
    </location>
</feature>
<feature type="repeat" description="HEAT 12" evidence="2">
    <location>
        <begin position="1207"/>
        <end position="1244"/>
    </location>
</feature>
<feature type="repeat" description="HEAT 13" evidence="2">
    <location>
        <begin position="1311"/>
        <end position="1348"/>
    </location>
</feature>
<feature type="repeat" description="HEAT 14" evidence="2">
    <location>
        <begin position="1358"/>
        <end position="1395"/>
    </location>
</feature>
<feature type="repeat" description="HEAT 15" evidence="2">
    <location>
        <begin position="1399"/>
        <end position="1435"/>
    </location>
</feature>
<feature type="repeat" description="HEAT 16" evidence="2">
    <location>
        <begin position="1438"/>
        <end position="1469"/>
    </location>
</feature>
<feature type="repeat" description="HEAT 17" evidence="2">
    <location>
        <begin position="1538"/>
        <end position="1576"/>
    </location>
</feature>
<feature type="repeat" description="HEAT 18" evidence="2">
    <location>
        <begin position="1586"/>
        <end position="1625"/>
    </location>
</feature>
<feature type="repeat" description="HEAT 19" evidence="2">
    <location>
        <begin position="1634"/>
        <end position="1669"/>
    </location>
</feature>
<feature type="repeat" description="HEAT 20" evidence="2">
    <location>
        <begin position="1672"/>
        <end position="1710"/>
    </location>
</feature>
<feature type="repeat" description="HEAT 21" evidence="2">
    <location>
        <begin position="1825"/>
        <end position="1862"/>
    </location>
</feature>
<feature type="repeat" description="HEAT 22" evidence="2">
    <location>
        <begin position="1916"/>
        <end position="1952"/>
    </location>
</feature>
<feature type="repeat" description="HEAT 23" evidence="2">
    <location>
        <begin position="1970"/>
        <end position="2009"/>
    </location>
</feature>
<feature type="repeat" description="HEAT 24" evidence="2">
    <location>
        <begin position="2103"/>
        <end position="2141"/>
    </location>
</feature>
<feature type="repeat" description="HEAT 25" evidence="2">
    <location>
        <begin position="2158"/>
        <end position="2195"/>
    </location>
</feature>
<feature type="repeat" description="HEAT 26" evidence="2">
    <location>
        <begin position="2206"/>
        <end position="2244"/>
    </location>
</feature>
<feature type="repeat" description="HEAT 27" evidence="2">
    <location>
        <begin position="2379"/>
        <end position="2417"/>
    </location>
</feature>
<feature type="repeat" description="HEAT 28" evidence="2">
    <location>
        <begin position="2443"/>
        <end position="2480"/>
    </location>
</feature>
<feature type="domain" description="FAT" evidence="4">
    <location>
        <begin position="2508"/>
        <end position="3069"/>
    </location>
</feature>
<feature type="domain" description="PI3K/PI4K catalytic" evidence="3">
    <location>
        <begin position="3295"/>
        <end position="3631"/>
    </location>
</feature>
<feature type="domain" description="FATC" evidence="4 5">
    <location>
        <begin position="3629"/>
        <end position="3661"/>
    </location>
</feature>
<feature type="region of interest" description="HEAT" evidence="1">
    <location>
        <begin position="1"/>
        <end position="2483"/>
    </location>
</feature>
<feature type="region of interest" description="Disordered" evidence="6">
    <location>
        <begin position="197"/>
        <end position="219"/>
    </location>
</feature>
<feature type="region of interest" description="Head" evidence="1">
    <location>
        <begin position="2484"/>
        <end position="3661"/>
    </location>
</feature>
<feature type="region of interest" description="G-loop" evidence="3">
    <location>
        <begin position="3301"/>
        <end position="3307"/>
    </location>
</feature>
<feature type="region of interest" description="Catalytic loop" evidence="3">
    <location>
        <begin position="3497"/>
        <end position="3505"/>
    </location>
</feature>
<feature type="region of interest" description="Activation loop" evidence="3">
    <location>
        <begin position="3517"/>
        <end position="3542"/>
    </location>
</feature>
<feature type="compositionally biased region" description="Low complexity" evidence="6">
    <location>
        <begin position="206"/>
        <end position="219"/>
    </location>
</feature>
<keyword id="KW-0010">Activator</keyword>
<keyword id="KW-0156">Chromatin regulator</keyword>
<keyword id="KW-0539">Nucleus</keyword>
<keyword id="KW-1185">Reference proteome</keyword>
<keyword id="KW-0677">Repeat</keyword>
<keyword id="KW-0804">Transcription</keyword>
<keyword id="KW-0805">Transcription regulation</keyword>
<name>TRA1_SCHPO</name>